<accession>P51590</accession>
<accession>Q5EBD7</accession>
<sequence>MLVTAGSLLGAIWTVLHLRILLLAAVTFLFLADFLKHRRPKNYPPGPWRLPLVGCLFHLDPKQPHLSLQQFVKKYGNVLSLDFANIPSVVVTGMPLIKEIFTQMEHNFLNRPVTLLRKHLFNKNGLIFSSGQTWKEQRRFALMTLRNFGLGKKSLEQRIQEEAYHLVEAIKDEGGLPFDPHFNINKAVSNIICSVTFGERFEYHDSQFQEMLRLLDEAMCLESSMMCQLYNIFPRILQYLPGSHQTLFSNWRKLKLFISDIIKNHRRDWDPDEPRDFIDAFLKEMAKYPDKTTTSFNEENLICSTLDLFFAGTETTSTTLRWALLCMALYPEVQEKMQAEIDRVIGQGRQPNLADRDSMPYTNAVIHEVQRIGNIIPFNVPREVAVDTYLAGFNLPKGTMILTNLTALHRDPKEWATPDTFNPEHFLENGQFKKRESFLPFSMGKRACLGEQLARSELFIFITSLIQKFTFKPPVNEKLSLQFRMSVTISPVSHRLCAIPRL</sequence>
<protein>
    <recommendedName>
        <fullName>Cytochrome P450 2J3</fullName>
        <ecNumber>1.14.14.1</ecNumber>
    </recommendedName>
    <alternativeName>
        <fullName>CYPIIJ3</fullName>
    </alternativeName>
</protein>
<proteinExistence type="evidence at transcript level"/>
<keyword id="KW-0256">Endoplasmic reticulum</keyword>
<keyword id="KW-0349">Heme</keyword>
<keyword id="KW-0408">Iron</keyword>
<keyword id="KW-0472">Membrane</keyword>
<keyword id="KW-0479">Metal-binding</keyword>
<keyword id="KW-0492">Microsome</keyword>
<keyword id="KW-0503">Monooxygenase</keyword>
<keyword id="KW-0560">Oxidoreductase</keyword>
<keyword id="KW-1185">Reference proteome</keyword>
<evidence type="ECO:0000250" key="1"/>
<evidence type="ECO:0000305" key="2"/>
<organism>
    <name type="scientific">Rattus norvegicus</name>
    <name type="common">Rat</name>
    <dbReference type="NCBI Taxonomy" id="10116"/>
    <lineage>
        <taxon>Eukaryota</taxon>
        <taxon>Metazoa</taxon>
        <taxon>Chordata</taxon>
        <taxon>Craniata</taxon>
        <taxon>Vertebrata</taxon>
        <taxon>Euteleostomi</taxon>
        <taxon>Mammalia</taxon>
        <taxon>Eutheria</taxon>
        <taxon>Euarchontoglires</taxon>
        <taxon>Glires</taxon>
        <taxon>Rodentia</taxon>
        <taxon>Myomorpha</taxon>
        <taxon>Muroidea</taxon>
        <taxon>Muridae</taxon>
        <taxon>Murinae</taxon>
        <taxon>Rattus</taxon>
    </lineage>
</organism>
<name>CP2J3_RAT</name>
<gene>
    <name type="primary">Cyp2j3</name>
    <name type="synonym">Cyp2j9</name>
</gene>
<dbReference type="EC" id="1.14.14.1"/>
<dbReference type="EMBL" id="U39943">
    <property type="protein sequence ID" value="AAB48545.1"/>
    <property type="molecule type" value="mRNA"/>
</dbReference>
<dbReference type="EMBL" id="BC089766">
    <property type="protein sequence ID" value="AAH89766.1"/>
    <property type="molecule type" value="mRNA"/>
</dbReference>
<dbReference type="RefSeq" id="NP_786942.1">
    <property type="nucleotide sequence ID" value="NM_175766.4"/>
</dbReference>
<dbReference type="SMR" id="P51590"/>
<dbReference type="FunCoup" id="P51590">
    <property type="interactions" value="95"/>
</dbReference>
<dbReference type="STRING" id="10116.ENSRNOP00000054968"/>
<dbReference type="PhosphoSitePlus" id="P51590"/>
<dbReference type="Ensembl" id="ENSRNOT00000058163.5">
    <property type="protein sequence ID" value="ENSRNOP00000054968.4"/>
    <property type="gene ID" value="ENSRNOG00000031004.5"/>
</dbReference>
<dbReference type="GeneID" id="313375"/>
<dbReference type="KEGG" id="rno:313375"/>
<dbReference type="UCSC" id="RGD:631442">
    <property type="organism name" value="rat"/>
</dbReference>
<dbReference type="AGR" id="RGD:631442"/>
<dbReference type="CTD" id="313375"/>
<dbReference type="RGD" id="631442">
    <property type="gene designation" value="Cyp2j3"/>
</dbReference>
<dbReference type="GeneTree" id="ENSGT00940000155417"/>
<dbReference type="InParanoid" id="P51590"/>
<dbReference type="OMA" id="RPMIPNL"/>
<dbReference type="OrthoDB" id="83594at9989"/>
<dbReference type="PhylomeDB" id="P51590"/>
<dbReference type="BRENDA" id="1.14.14.24">
    <property type="organism ID" value="5301"/>
</dbReference>
<dbReference type="Reactome" id="R-RNO-211935">
    <property type="pathway name" value="Fatty acids"/>
</dbReference>
<dbReference type="Reactome" id="R-RNO-211981">
    <property type="pathway name" value="Xenobiotics"/>
</dbReference>
<dbReference type="Reactome" id="R-RNO-2142670">
    <property type="pathway name" value="Synthesis of epoxy (EET) and dihydroxyeicosatrienoic acids (DHET)"/>
</dbReference>
<dbReference type="PRO" id="PR:P51590"/>
<dbReference type="Proteomes" id="UP000002494">
    <property type="component" value="Chromosome 5"/>
</dbReference>
<dbReference type="GO" id="GO:0005737">
    <property type="term" value="C:cytoplasm"/>
    <property type="evidence" value="ECO:0000318"/>
    <property type="project" value="GO_Central"/>
</dbReference>
<dbReference type="GO" id="GO:0005789">
    <property type="term" value="C:endoplasmic reticulum membrane"/>
    <property type="evidence" value="ECO:0007669"/>
    <property type="project" value="UniProtKB-SubCell"/>
</dbReference>
<dbReference type="GO" id="GO:0043231">
    <property type="term" value="C:intracellular membrane-bounded organelle"/>
    <property type="evidence" value="ECO:0000318"/>
    <property type="project" value="GO_Central"/>
</dbReference>
<dbReference type="GO" id="GO:0008405">
    <property type="term" value="F:arachidonate 11,12-epoxygenase activity"/>
    <property type="evidence" value="ECO:0007669"/>
    <property type="project" value="Ensembl"/>
</dbReference>
<dbReference type="GO" id="GO:0008404">
    <property type="term" value="F:arachidonate 14,15-epoxygenase activity"/>
    <property type="evidence" value="ECO:0007669"/>
    <property type="project" value="Ensembl"/>
</dbReference>
<dbReference type="GO" id="GO:0020037">
    <property type="term" value="F:heme binding"/>
    <property type="evidence" value="ECO:0000318"/>
    <property type="project" value="GO_Central"/>
</dbReference>
<dbReference type="GO" id="GO:0005506">
    <property type="term" value="F:iron ion binding"/>
    <property type="evidence" value="ECO:0007669"/>
    <property type="project" value="InterPro"/>
</dbReference>
<dbReference type="GO" id="GO:0016853">
    <property type="term" value="F:isomerase activity"/>
    <property type="evidence" value="ECO:0007669"/>
    <property type="project" value="Ensembl"/>
</dbReference>
<dbReference type="GO" id="GO:0071614">
    <property type="term" value="F:linoleic acid epoxygenase activity"/>
    <property type="evidence" value="ECO:0007669"/>
    <property type="project" value="Ensembl"/>
</dbReference>
<dbReference type="GO" id="GO:0016712">
    <property type="term" value="F:oxidoreductase activity, acting on paired donors, with incorporation or reduction of molecular oxygen, reduced flavin or flavoprotein as one donor, and incorporation of one atom of oxygen"/>
    <property type="evidence" value="ECO:0000318"/>
    <property type="project" value="GO_Central"/>
</dbReference>
<dbReference type="GO" id="GO:0019373">
    <property type="term" value="P:epoxygenase P450 pathway"/>
    <property type="evidence" value="ECO:0007669"/>
    <property type="project" value="Ensembl"/>
</dbReference>
<dbReference type="GO" id="GO:0043651">
    <property type="term" value="P:linoleic acid metabolic process"/>
    <property type="evidence" value="ECO:0007669"/>
    <property type="project" value="Ensembl"/>
</dbReference>
<dbReference type="GO" id="GO:0006082">
    <property type="term" value="P:organic acid metabolic process"/>
    <property type="evidence" value="ECO:0000318"/>
    <property type="project" value="GO_Central"/>
</dbReference>
<dbReference type="GO" id="GO:0006805">
    <property type="term" value="P:xenobiotic metabolic process"/>
    <property type="evidence" value="ECO:0000318"/>
    <property type="project" value="GO_Central"/>
</dbReference>
<dbReference type="CDD" id="cd20662">
    <property type="entry name" value="CYP2J"/>
    <property type="match status" value="1"/>
</dbReference>
<dbReference type="FunFam" id="1.10.630.10:FF:000004">
    <property type="entry name" value="cytochrome P450 2D15 isoform X1"/>
    <property type="match status" value="1"/>
</dbReference>
<dbReference type="Gene3D" id="1.10.630.10">
    <property type="entry name" value="Cytochrome P450"/>
    <property type="match status" value="1"/>
</dbReference>
<dbReference type="InterPro" id="IPR001128">
    <property type="entry name" value="Cyt_P450"/>
</dbReference>
<dbReference type="InterPro" id="IPR017972">
    <property type="entry name" value="Cyt_P450_CS"/>
</dbReference>
<dbReference type="InterPro" id="IPR002401">
    <property type="entry name" value="Cyt_P450_E_grp-I"/>
</dbReference>
<dbReference type="InterPro" id="IPR008071">
    <property type="entry name" value="Cyt_P450_E_grp-I_CYP2J-like"/>
</dbReference>
<dbReference type="InterPro" id="IPR036396">
    <property type="entry name" value="Cyt_P450_sf"/>
</dbReference>
<dbReference type="InterPro" id="IPR050182">
    <property type="entry name" value="Cytochrome_P450_fam2"/>
</dbReference>
<dbReference type="PANTHER" id="PTHR24300">
    <property type="entry name" value="CYTOCHROME P450 508A4-RELATED"/>
    <property type="match status" value="1"/>
</dbReference>
<dbReference type="PANTHER" id="PTHR24300:SF108">
    <property type="entry name" value="CYTOCHROME P450 CYP2J9-RELATED"/>
    <property type="match status" value="1"/>
</dbReference>
<dbReference type="Pfam" id="PF00067">
    <property type="entry name" value="p450"/>
    <property type="match status" value="1"/>
</dbReference>
<dbReference type="PRINTS" id="PR00463">
    <property type="entry name" value="EP450I"/>
</dbReference>
<dbReference type="PRINTS" id="PR01688">
    <property type="entry name" value="EP450ICYP2J"/>
</dbReference>
<dbReference type="PRINTS" id="PR00385">
    <property type="entry name" value="P450"/>
</dbReference>
<dbReference type="SUPFAM" id="SSF48264">
    <property type="entry name" value="Cytochrome P450"/>
    <property type="match status" value="1"/>
</dbReference>
<dbReference type="PROSITE" id="PS00086">
    <property type="entry name" value="CYTOCHROME_P450"/>
    <property type="match status" value="1"/>
</dbReference>
<comment type="function">
    <text>This enzyme metabolizes arachidonic acid predominantly via a NADPH-dependent olefin epoxidation mainly to 14,15-, 11,12-, and 8,9-epoxyeicosatrienoic acids (EET). It also acts as an omega-1-hydroxylase by metabolizing arachidonic acid to 19-hydroxyeicosatetraenoic acid (19-OH-AA).</text>
</comment>
<comment type="catalytic activity">
    <reaction>
        <text>an organic molecule + reduced [NADPH--hemoprotein reductase] + O2 = an alcohol + oxidized [NADPH--hemoprotein reductase] + H2O + H(+)</text>
        <dbReference type="Rhea" id="RHEA:17149"/>
        <dbReference type="Rhea" id="RHEA-COMP:11964"/>
        <dbReference type="Rhea" id="RHEA-COMP:11965"/>
        <dbReference type="ChEBI" id="CHEBI:15377"/>
        <dbReference type="ChEBI" id="CHEBI:15378"/>
        <dbReference type="ChEBI" id="CHEBI:15379"/>
        <dbReference type="ChEBI" id="CHEBI:30879"/>
        <dbReference type="ChEBI" id="CHEBI:57618"/>
        <dbReference type="ChEBI" id="CHEBI:58210"/>
        <dbReference type="ChEBI" id="CHEBI:142491"/>
        <dbReference type="EC" id="1.14.14.1"/>
    </reaction>
</comment>
<comment type="cofactor">
    <cofactor evidence="1">
        <name>heme</name>
        <dbReference type="ChEBI" id="CHEBI:30413"/>
    </cofactor>
</comment>
<comment type="subcellular location">
    <subcellularLocation>
        <location>Endoplasmic reticulum membrane</location>
        <topology>Peripheral membrane protein</topology>
    </subcellularLocation>
    <subcellularLocation>
        <location>Microsome membrane</location>
        <topology>Peripheral membrane protein</topology>
    </subcellularLocation>
</comment>
<comment type="tissue specificity">
    <text>Abundantly expressed in heart and liver.</text>
</comment>
<comment type="similarity">
    <text evidence="2">Belongs to the cytochrome P450 family.</text>
</comment>
<reference key="1">
    <citation type="journal article" date="1997" name="J. Biol. Chem.">
        <title>Molecular cloning, expression, and functional significance of a cytochrome P450 highly expressed in rat heart myocytes.</title>
        <authorList>
            <person name="Wu S."/>
            <person name="Chen W."/>
            <person name="Murphy E."/>
            <person name="Gabel S."/>
            <person name="Tomer K.B."/>
            <person name="Foley J."/>
            <person name="Steenbergen C."/>
            <person name="Falck J.R."/>
            <person name="Moomaw C.R."/>
            <person name="Zeldin D.C."/>
        </authorList>
    </citation>
    <scope>NUCLEOTIDE SEQUENCE [MRNA]</scope>
    <source>
        <strain>Fischer 344</strain>
    </source>
</reference>
<reference key="2">
    <citation type="journal article" date="2004" name="Genome Res.">
        <title>The status, quality, and expansion of the NIH full-length cDNA project: the Mammalian Gene Collection (MGC).</title>
        <authorList>
            <consortium name="The MGC Project Team"/>
        </authorList>
    </citation>
    <scope>NUCLEOTIDE SEQUENCE [LARGE SCALE MRNA]</scope>
    <source>
        <tissue>Spleen</tissue>
    </source>
</reference>
<feature type="chain" id="PRO_0000051770" description="Cytochrome P450 2J3">
    <location>
        <begin position="1"/>
        <end position="502"/>
    </location>
</feature>
<feature type="binding site" description="axial binding residue" evidence="1">
    <location>
        <position position="448"/>
    </location>
    <ligand>
        <name>heme</name>
        <dbReference type="ChEBI" id="CHEBI:30413"/>
    </ligand>
    <ligandPart>
        <name>Fe</name>
        <dbReference type="ChEBI" id="CHEBI:18248"/>
    </ligandPart>
</feature>